<organism>
    <name type="scientific">Leptospira borgpetersenii serovar Hardjo-bovis (strain JB197)</name>
    <dbReference type="NCBI Taxonomy" id="355277"/>
    <lineage>
        <taxon>Bacteria</taxon>
        <taxon>Pseudomonadati</taxon>
        <taxon>Spirochaetota</taxon>
        <taxon>Spirochaetia</taxon>
        <taxon>Leptospirales</taxon>
        <taxon>Leptospiraceae</taxon>
        <taxon>Leptospira</taxon>
    </lineage>
</organism>
<accession>Q04R63</accession>
<name>ACP_LEPBJ</name>
<proteinExistence type="inferred from homology"/>
<keyword id="KW-0963">Cytoplasm</keyword>
<keyword id="KW-0275">Fatty acid biosynthesis</keyword>
<keyword id="KW-0276">Fatty acid metabolism</keyword>
<keyword id="KW-0444">Lipid biosynthesis</keyword>
<keyword id="KW-0443">Lipid metabolism</keyword>
<keyword id="KW-0596">Phosphopantetheine</keyword>
<keyword id="KW-0597">Phosphoprotein</keyword>
<protein>
    <recommendedName>
        <fullName evidence="1">Acyl carrier protein</fullName>
        <shortName evidence="1">ACP</shortName>
    </recommendedName>
</protein>
<feature type="chain" id="PRO_1000066631" description="Acyl carrier protein">
    <location>
        <begin position="1"/>
        <end position="77"/>
    </location>
</feature>
<feature type="domain" description="Carrier" evidence="2">
    <location>
        <begin position="1"/>
        <end position="76"/>
    </location>
</feature>
<feature type="modified residue" description="O-(pantetheine 4'-phosphoryl)serine" evidence="2">
    <location>
        <position position="36"/>
    </location>
</feature>
<gene>
    <name evidence="1" type="primary">acpP</name>
    <name type="ordered locus">LBJ_2112</name>
</gene>
<dbReference type="EMBL" id="CP000350">
    <property type="protein sequence ID" value="ABJ76607.1"/>
    <property type="molecule type" value="Genomic_DNA"/>
</dbReference>
<dbReference type="RefSeq" id="WP_000753030.1">
    <property type="nucleotide sequence ID" value="NC_008510.1"/>
</dbReference>
<dbReference type="SMR" id="Q04R63"/>
<dbReference type="GeneID" id="61173552"/>
<dbReference type="KEGG" id="lbj:LBJ_2112"/>
<dbReference type="HOGENOM" id="CLU_108696_5_1_12"/>
<dbReference type="UniPathway" id="UPA00094"/>
<dbReference type="Proteomes" id="UP000000656">
    <property type="component" value="Chromosome 1"/>
</dbReference>
<dbReference type="GO" id="GO:0005829">
    <property type="term" value="C:cytosol"/>
    <property type="evidence" value="ECO:0007669"/>
    <property type="project" value="TreeGrafter"/>
</dbReference>
<dbReference type="GO" id="GO:0016020">
    <property type="term" value="C:membrane"/>
    <property type="evidence" value="ECO:0007669"/>
    <property type="project" value="GOC"/>
</dbReference>
<dbReference type="GO" id="GO:0000035">
    <property type="term" value="F:acyl binding"/>
    <property type="evidence" value="ECO:0007669"/>
    <property type="project" value="TreeGrafter"/>
</dbReference>
<dbReference type="GO" id="GO:0000036">
    <property type="term" value="F:acyl carrier activity"/>
    <property type="evidence" value="ECO:0007669"/>
    <property type="project" value="UniProtKB-UniRule"/>
</dbReference>
<dbReference type="GO" id="GO:0009245">
    <property type="term" value="P:lipid A biosynthetic process"/>
    <property type="evidence" value="ECO:0007669"/>
    <property type="project" value="TreeGrafter"/>
</dbReference>
<dbReference type="FunFam" id="1.10.1200.10:FF:000001">
    <property type="entry name" value="Acyl carrier protein"/>
    <property type="match status" value="1"/>
</dbReference>
<dbReference type="Gene3D" id="1.10.1200.10">
    <property type="entry name" value="ACP-like"/>
    <property type="match status" value="1"/>
</dbReference>
<dbReference type="HAMAP" id="MF_01217">
    <property type="entry name" value="Acyl_carrier"/>
    <property type="match status" value="1"/>
</dbReference>
<dbReference type="InterPro" id="IPR003231">
    <property type="entry name" value="ACP"/>
</dbReference>
<dbReference type="InterPro" id="IPR036736">
    <property type="entry name" value="ACP-like_sf"/>
</dbReference>
<dbReference type="InterPro" id="IPR009081">
    <property type="entry name" value="PP-bd_ACP"/>
</dbReference>
<dbReference type="InterPro" id="IPR006162">
    <property type="entry name" value="Ppantetheine_attach_site"/>
</dbReference>
<dbReference type="NCBIfam" id="TIGR00517">
    <property type="entry name" value="acyl_carrier"/>
    <property type="match status" value="1"/>
</dbReference>
<dbReference type="NCBIfam" id="NF002148">
    <property type="entry name" value="PRK00982.1-2"/>
    <property type="match status" value="1"/>
</dbReference>
<dbReference type="NCBIfam" id="NF002149">
    <property type="entry name" value="PRK00982.1-3"/>
    <property type="match status" value="1"/>
</dbReference>
<dbReference type="NCBIfam" id="NF002150">
    <property type="entry name" value="PRK00982.1-4"/>
    <property type="match status" value="1"/>
</dbReference>
<dbReference type="NCBIfam" id="NF002151">
    <property type="entry name" value="PRK00982.1-5"/>
    <property type="match status" value="1"/>
</dbReference>
<dbReference type="PANTHER" id="PTHR20863">
    <property type="entry name" value="ACYL CARRIER PROTEIN"/>
    <property type="match status" value="1"/>
</dbReference>
<dbReference type="PANTHER" id="PTHR20863:SF76">
    <property type="entry name" value="CARRIER DOMAIN-CONTAINING PROTEIN"/>
    <property type="match status" value="1"/>
</dbReference>
<dbReference type="Pfam" id="PF00550">
    <property type="entry name" value="PP-binding"/>
    <property type="match status" value="1"/>
</dbReference>
<dbReference type="SUPFAM" id="SSF47336">
    <property type="entry name" value="ACP-like"/>
    <property type="match status" value="1"/>
</dbReference>
<dbReference type="PROSITE" id="PS50075">
    <property type="entry name" value="CARRIER"/>
    <property type="match status" value="1"/>
</dbReference>
<dbReference type="PROSITE" id="PS00012">
    <property type="entry name" value="PHOSPHOPANTETHEINE"/>
    <property type="match status" value="1"/>
</dbReference>
<reference key="1">
    <citation type="journal article" date="2006" name="Proc. Natl. Acad. Sci. U.S.A.">
        <title>Genome reduction in Leptospira borgpetersenii reflects limited transmission potential.</title>
        <authorList>
            <person name="Bulach D.M."/>
            <person name="Zuerner R.L."/>
            <person name="Wilson P."/>
            <person name="Seemann T."/>
            <person name="McGrath A."/>
            <person name="Cullen P.A."/>
            <person name="Davis J."/>
            <person name="Johnson M."/>
            <person name="Kuczek E."/>
            <person name="Alt D.P."/>
            <person name="Peterson-Burch B."/>
            <person name="Coppel R.L."/>
            <person name="Rood J.I."/>
            <person name="Davies J.K."/>
            <person name="Adler B."/>
        </authorList>
    </citation>
    <scope>NUCLEOTIDE SEQUENCE [LARGE SCALE GENOMIC DNA]</scope>
    <source>
        <strain>JB197</strain>
    </source>
</reference>
<comment type="function">
    <text evidence="1">Carrier of the growing fatty acid chain in fatty acid biosynthesis.</text>
</comment>
<comment type="pathway">
    <text evidence="1">Lipid metabolism; fatty acid biosynthesis.</text>
</comment>
<comment type="subcellular location">
    <subcellularLocation>
        <location evidence="1">Cytoplasm</location>
    </subcellularLocation>
</comment>
<comment type="PTM">
    <text evidence="1">4'-phosphopantetheine is transferred from CoA to a specific serine of apo-ACP by AcpS. This modification is essential for activity because fatty acids are bound in thioester linkage to the sulfhydryl of the prosthetic group.</text>
</comment>
<comment type="similarity">
    <text evidence="1">Belongs to the acyl carrier protein (ACP) family.</text>
</comment>
<sequence>MADFEKVKSIIVEQLGVDESEVTPEAHFIDDLGADSLDTVELVMALEEEFGIEISDEDAEKIQTVGDVTKFIDNLKS</sequence>
<evidence type="ECO:0000255" key="1">
    <source>
        <dbReference type="HAMAP-Rule" id="MF_01217"/>
    </source>
</evidence>
<evidence type="ECO:0000255" key="2">
    <source>
        <dbReference type="PROSITE-ProRule" id="PRU00258"/>
    </source>
</evidence>